<name>RUVA_METS4</name>
<sequence length="205" mass="21413">MIGKLKGVVDSYGEDFVILDVHGVGYEVHCSARTLQRLPPAGEATDLAIETVVREDMIRLYGFRSDAEREWFRLLQTVQGVGTRVALGLLSVLEPAELATAIATGDKGAVARAPGVGPRLAARLVAELKDKAPAFAPVDPALVRLAGAVEARTAPQPVADAISALVNLGYPQAQASAAVAAALQSAGAEAEAKTLIRLGLRELAR</sequence>
<protein>
    <recommendedName>
        <fullName evidence="1">Holliday junction branch migration complex subunit RuvA</fullName>
    </recommendedName>
</protein>
<feature type="chain" id="PRO_1000090339" description="Holliday junction branch migration complex subunit RuvA">
    <location>
        <begin position="1"/>
        <end position="205"/>
    </location>
</feature>
<feature type="region of interest" description="Domain I" evidence="1">
    <location>
        <begin position="1"/>
        <end position="64"/>
    </location>
</feature>
<feature type="region of interest" description="Domain II" evidence="1">
    <location>
        <begin position="65"/>
        <end position="143"/>
    </location>
</feature>
<feature type="region of interest" description="Flexible linker" evidence="1">
    <location>
        <begin position="144"/>
        <end position="152"/>
    </location>
</feature>
<feature type="region of interest" description="Domain III" evidence="1">
    <location>
        <begin position="153"/>
        <end position="205"/>
    </location>
</feature>
<gene>
    <name evidence="1" type="primary">ruvA</name>
    <name type="ordered locus">M446_0850</name>
</gene>
<evidence type="ECO:0000255" key="1">
    <source>
        <dbReference type="HAMAP-Rule" id="MF_00031"/>
    </source>
</evidence>
<keyword id="KW-0963">Cytoplasm</keyword>
<keyword id="KW-0227">DNA damage</keyword>
<keyword id="KW-0233">DNA recombination</keyword>
<keyword id="KW-0234">DNA repair</keyword>
<keyword id="KW-0238">DNA-binding</keyword>
<reference key="1">
    <citation type="submission" date="2008-02" db="EMBL/GenBank/DDBJ databases">
        <title>Complete sequence of chromosome of Methylobacterium sp. 4-46.</title>
        <authorList>
            <consortium name="US DOE Joint Genome Institute"/>
            <person name="Copeland A."/>
            <person name="Lucas S."/>
            <person name="Lapidus A."/>
            <person name="Glavina del Rio T."/>
            <person name="Dalin E."/>
            <person name="Tice H."/>
            <person name="Bruce D."/>
            <person name="Goodwin L."/>
            <person name="Pitluck S."/>
            <person name="Chertkov O."/>
            <person name="Brettin T."/>
            <person name="Detter J.C."/>
            <person name="Han C."/>
            <person name="Kuske C.R."/>
            <person name="Schmutz J."/>
            <person name="Larimer F."/>
            <person name="Land M."/>
            <person name="Hauser L."/>
            <person name="Kyrpides N."/>
            <person name="Ivanova N."/>
            <person name="Marx C.J."/>
            <person name="Richardson P."/>
        </authorList>
    </citation>
    <scope>NUCLEOTIDE SEQUENCE [LARGE SCALE GENOMIC DNA]</scope>
    <source>
        <strain>4-46</strain>
    </source>
</reference>
<accession>B0UA56</accession>
<comment type="function">
    <text evidence="1">The RuvA-RuvB-RuvC complex processes Holliday junction (HJ) DNA during genetic recombination and DNA repair, while the RuvA-RuvB complex plays an important role in the rescue of blocked DNA replication forks via replication fork reversal (RFR). RuvA specifically binds to HJ cruciform DNA, conferring on it an open structure. The RuvB hexamer acts as an ATP-dependent pump, pulling dsDNA into and through the RuvAB complex. HJ branch migration allows RuvC to scan DNA until it finds its consensus sequence, where it cleaves and resolves the cruciform DNA.</text>
</comment>
<comment type="subunit">
    <text evidence="1">Homotetramer. Forms an RuvA(8)-RuvB(12)-Holliday junction (HJ) complex. HJ DNA is sandwiched between 2 RuvA tetramers; dsDNA enters through RuvA and exits via RuvB. An RuvB hexamer assembles on each DNA strand where it exits the tetramer. Each RuvB hexamer is contacted by two RuvA subunits (via domain III) on 2 adjacent RuvB subunits; this complex drives branch migration. In the full resolvosome a probable DNA-RuvA(4)-RuvB(12)-RuvC(2) complex forms which resolves the HJ.</text>
</comment>
<comment type="subcellular location">
    <subcellularLocation>
        <location evidence="1">Cytoplasm</location>
    </subcellularLocation>
</comment>
<comment type="domain">
    <text evidence="1">Has three domains with a flexible linker between the domains II and III and assumes an 'L' shape. Domain III is highly mobile and contacts RuvB.</text>
</comment>
<comment type="similarity">
    <text evidence="1">Belongs to the RuvA family.</text>
</comment>
<organism>
    <name type="scientific">Methylobacterium sp. (strain 4-46)</name>
    <dbReference type="NCBI Taxonomy" id="426117"/>
    <lineage>
        <taxon>Bacteria</taxon>
        <taxon>Pseudomonadati</taxon>
        <taxon>Pseudomonadota</taxon>
        <taxon>Alphaproteobacteria</taxon>
        <taxon>Hyphomicrobiales</taxon>
        <taxon>Methylobacteriaceae</taxon>
        <taxon>Methylobacterium</taxon>
    </lineage>
</organism>
<proteinExistence type="inferred from homology"/>
<dbReference type="EMBL" id="CP000943">
    <property type="protein sequence ID" value="ACA15402.1"/>
    <property type="molecule type" value="Genomic_DNA"/>
</dbReference>
<dbReference type="RefSeq" id="WP_012330819.1">
    <property type="nucleotide sequence ID" value="NC_010511.1"/>
</dbReference>
<dbReference type="SMR" id="B0UA56"/>
<dbReference type="STRING" id="426117.M446_0850"/>
<dbReference type="KEGG" id="met:M446_0850"/>
<dbReference type="eggNOG" id="COG0632">
    <property type="taxonomic scope" value="Bacteria"/>
</dbReference>
<dbReference type="HOGENOM" id="CLU_087936_3_0_5"/>
<dbReference type="GO" id="GO:0005737">
    <property type="term" value="C:cytoplasm"/>
    <property type="evidence" value="ECO:0007669"/>
    <property type="project" value="UniProtKB-SubCell"/>
</dbReference>
<dbReference type="GO" id="GO:0009379">
    <property type="term" value="C:Holliday junction helicase complex"/>
    <property type="evidence" value="ECO:0007669"/>
    <property type="project" value="InterPro"/>
</dbReference>
<dbReference type="GO" id="GO:0048476">
    <property type="term" value="C:Holliday junction resolvase complex"/>
    <property type="evidence" value="ECO:0007669"/>
    <property type="project" value="UniProtKB-UniRule"/>
</dbReference>
<dbReference type="GO" id="GO:0005524">
    <property type="term" value="F:ATP binding"/>
    <property type="evidence" value="ECO:0007669"/>
    <property type="project" value="InterPro"/>
</dbReference>
<dbReference type="GO" id="GO:0000400">
    <property type="term" value="F:four-way junction DNA binding"/>
    <property type="evidence" value="ECO:0007669"/>
    <property type="project" value="UniProtKB-UniRule"/>
</dbReference>
<dbReference type="GO" id="GO:0009378">
    <property type="term" value="F:four-way junction helicase activity"/>
    <property type="evidence" value="ECO:0007669"/>
    <property type="project" value="InterPro"/>
</dbReference>
<dbReference type="GO" id="GO:0006310">
    <property type="term" value="P:DNA recombination"/>
    <property type="evidence" value="ECO:0007669"/>
    <property type="project" value="UniProtKB-UniRule"/>
</dbReference>
<dbReference type="GO" id="GO:0006281">
    <property type="term" value="P:DNA repair"/>
    <property type="evidence" value="ECO:0007669"/>
    <property type="project" value="UniProtKB-UniRule"/>
</dbReference>
<dbReference type="Gene3D" id="1.10.150.20">
    <property type="entry name" value="5' to 3' exonuclease, C-terminal subdomain"/>
    <property type="match status" value="1"/>
</dbReference>
<dbReference type="Gene3D" id="1.10.8.10">
    <property type="entry name" value="DNA helicase RuvA subunit, C-terminal domain"/>
    <property type="match status" value="1"/>
</dbReference>
<dbReference type="Gene3D" id="2.40.50.140">
    <property type="entry name" value="Nucleic acid-binding proteins"/>
    <property type="match status" value="1"/>
</dbReference>
<dbReference type="HAMAP" id="MF_00031">
    <property type="entry name" value="DNA_HJ_migration_RuvA"/>
    <property type="match status" value="1"/>
</dbReference>
<dbReference type="InterPro" id="IPR013849">
    <property type="entry name" value="DNA_helicase_Holl-junc_RuvA_I"/>
</dbReference>
<dbReference type="InterPro" id="IPR012340">
    <property type="entry name" value="NA-bd_OB-fold"/>
</dbReference>
<dbReference type="InterPro" id="IPR000085">
    <property type="entry name" value="RuvA"/>
</dbReference>
<dbReference type="InterPro" id="IPR010994">
    <property type="entry name" value="RuvA_2-like"/>
</dbReference>
<dbReference type="InterPro" id="IPR011114">
    <property type="entry name" value="RuvA_C"/>
</dbReference>
<dbReference type="InterPro" id="IPR036267">
    <property type="entry name" value="RuvA_C_sf"/>
</dbReference>
<dbReference type="NCBIfam" id="TIGR00084">
    <property type="entry name" value="ruvA"/>
    <property type="match status" value="1"/>
</dbReference>
<dbReference type="Pfam" id="PF14520">
    <property type="entry name" value="HHH_5"/>
    <property type="match status" value="1"/>
</dbReference>
<dbReference type="Pfam" id="PF07499">
    <property type="entry name" value="RuvA_C"/>
    <property type="match status" value="1"/>
</dbReference>
<dbReference type="Pfam" id="PF01330">
    <property type="entry name" value="RuvA_N"/>
    <property type="match status" value="1"/>
</dbReference>
<dbReference type="SUPFAM" id="SSF46929">
    <property type="entry name" value="DNA helicase RuvA subunit, C-terminal domain"/>
    <property type="match status" value="1"/>
</dbReference>
<dbReference type="SUPFAM" id="SSF50249">
    <property type="entry name" value="Nucleic acid-binding proteins"/>
    <property type="match status" value="1"/>
</dbReference>
<dbReference type="SUPFAM" id="SSF47781">
    <property type="entry name" value="RuvA domain 2-like"/>
    <property type="match status" value="1"/>
</dbReference>